<protein>
    <recommendedName>
        <fullName evidence="8">CEP295 N-terminal-like protein</fullName>
    </recommendedName>
    <alternativeName>
        <fullName evidence="7">Differential display clone 8</fullName>
    </alternativeName>
    <alternativeName>
        <fullName evidence="1">KIAA1731 N-terminal like protein</fullName>
    </alternativeName>
</protein>
<keyword id="KW-0966">Cell projection</keyword>
<keyword id="KW-0969">Cilium</keyword>
<keyword id="KW-0175">Coiled coil</keyword>
<keyword id="KW-1185">Reference proteome</keyword>
<dbReference type="EMBL" id="Y09878">
    <property type="protein sequence ID" value="CAA71005.1"/>
    <property type="molecule type" value="mRNA"/>
</dbReference>
<dbReference type="EMBL" id="AK132657">
    <property type="protein sequence ID" value="BAE21285.1"/>
    <property type="molecule type" value="mRNA"/>
</dbReference>
<dbReference type="EMBL" id="AL591404">
    <property type="status" value="NOT_ANNOTATED_CDS"/>
    <property type="molecule type" value="Genomic_DNA"/>
</dbReference>
<dbReference type="EMBL" id="BC100451">
    <property type="protein sequence ID" value="AAI00452.1"/>
    <property type="molecule type" value="mRNA"/>
</dbReference>
<dbReference type="CCDS" id="CCDS25700.1"/>
<dbReference type="RefSeq" id="NP_067415.2">
    <property type="nucleotide sequence ID" value="NM_021440.2"/>
</dbReference>
<dbReference type="RefSeq" id="XP_006533923.1">
    <property type="nucleotide sequence ID" value="XM_006533860.3"/>
</dbReference>
<dbReference type="RefSeq" id="XP_011247468.1">
    <property type="nucleotide sequence ID" value="XM_011249166.3"/>
</dbReference>
<dbReference type="SMR" id="Q497N6"/>
<dbReference type="BioGRID" id="208421">
    <property type="interactions" value="1"/>
</dbReference>
<dbReference type="FunCoup" id="Q497N6">
    <property type="interactions" value="5"/>
</dbReference>
<dbReference type="STRING" id="10090.ENSMUSP00000099313"/>
<dbReference type="iPTMnet" id="Q497N6"/>
<dbReference type="PhosphoSitePlus" id="Q497N6"/>
<dbReference type="PaxDb" id="10090-ENSMUSP00000099313"/>
<dbReference type="ProteomicsDB" id="265462"/>
<dbReference type="Antibodypedia" id="32615">
    <property type="antibodies" value="16 antibodies from 6 providers"/>
</dbReference>
<dbReference type="DNASU" id="58251"/>
<dbReference type="Ensembl" id="ENSMUST00000103024.4">
    <property type="protein sequence ID" value="ENSMUSP00000099313.4"/>
    <property type="gene ID" value="ENSMUSG00000076433.6"/>
</dbReference>
<dbReference type="Ensembl" id="ENSMUST00000168100.3">
    <property type="protein sequence ID" value="ENSMUSP00000128122.2"/>
    <property type="gene ID" value="ENSMUSG00000076433.6"/>
</dbReference>
<dbReference type="GeneID" id="58251"/>
<dbReference type="KEGG" id="mmu:58251"/>
<dbReference type="UCSC" id="uc007mox.2">
    <property type="organism name" value="mouse"/>
</dbReference>
<dbReference type="AGR" id="MGI:1929713"/>
<dbReference type="CTD" id="100653515"/>
<dbReference type="MGI" id="MGI:1929713">
    <property type="gene designation" value="Cep295nl"/>
</dbReference>
<dbReference type="VEuPathDB" id="HostDB:ENSMUSG00000076433"/>
<dbReference type="eggNOG" id="ENOG502QSZR">
    <property type="taxonomic scope" value="Eukaryota"/>
</dbReference>
<dbReference type="GeneTree" id="ENSGT00940000153123"/>
<dbReference type="HOGENOM" id="CLU_447551_0_0_1"/>
<dbReference type="InParanoid" id="Q497N6"/>
<dbReference type="OMA" id="WHSQMIR"/>
<dbReference type="OrthoDB" id="6359887at2759"/>
<dbReference type="PhylomeDB" id="Q497N6"/>
<dbReference type="BioGRID-ORCS" id="58251">
    <property type="hits" value="5 hits in 76 CRISPR screens"/>
</dbReference>
<dbReference type="PRO" id="PR:Q497N6"/>
<dbReference type="Proteomes" id="UP000000589">
    <property type="component" value="Chromosome 11"/>
</dbReference>
<dbReference type="RNAct" id="Q497N6">
    <property type="molecule type" value="protein"/>
</dbReference>
<dbReference type="Bgee" id="ENSMUSG00000076433">
    <property type="expression patterns" value="Expressed in seminiferous tubule of testis and 44 other cell types or tissues"/>
</dbReference>
<dbReference type="GO" id="GO:0031514">
    <property type="term" value="C:motile cilium"/>
    <property type="evidence" value="ECO:0000314"/>
    <property type="project" value="MGI"/>
</dbReference>
<dbReference type="PANTHER" id="PTHR21553">
    <property type="entry name" value="ALMS1-RELATED"/>
    <property type="match status" value="1"/>
</dbReference>
<dbReference type="PANTHER" id="PTHR21553:SF33">
    <property type="entry name" value="CEP295 N-TERMINAL-LIKE PROTEIN"/>
    <property type="match status" value="1"/>
</dbReference>
<proteinExistence type="evidence at protein level"/>
<gene>
    <name evidence="1" type="primary">Cep295nl</name>
    <name evidence="9" type="synonym">Ddc8</name>
    <name evidence="1" type="synonym">Kiaa1731nl</name>
</gene>
<accession>Q497N6</accession>
<accession>P97320</accession>
<comment type="subcellular location">
    <subcellularLocation>
        <location evidence="5">Cell projection</location>
        <location evidence="5">Cilium</location>
    </subcellularLocation>
    <text>Colocalizes to the motile cilium of mature spermatozoa.</text>
</comment>
<comment type="tissue specificity">
    <text evidence="4 5">Expressed in mature spermatozoa (at protein level). Detected in retina, lung and kidney. In brain, highly expressed in brain-stem, cerebral cortex and thalamus with lesser expression in cerebellum and hippocampus.</text>
</comment>
<comment type="developmental stage">
    <text evidence="4 5 6">Expressed during the postmeiotic stages of spermatogenesis. Detected at least at 14 dpc, the expression being enriched in kidney and small intestine. Within the nervous system, expression is prominent in the most superficial layers of the posterior cerebral cortex at 14 dpc and retina at 18 dpc. Expression is enriched in the posterior cerebral cortex at birth and declines at 7 days after birth.</text>
</comment>
<comment type="induction">
    <text evidence="4">Expression is moderately up-regulated 2 days after intracranial injury and increases at 4 and 7 days post-injury.</text>
</comment>
<sequence>MQRDTERAAQLSPSSEDEALVLRQKPLEMPAQEEDSTTLQQWKARQLQRLAEELKAEWQEARLQQVRQAERLYLSHLLDEAAERSMGNDPSVHEQNQRRTAKHTRAKERNRAAFREERGRREEHPRQHPKSRKKAPCSERRSSAKARGPASGEKGKRRRVSSSKDHDGYQGPRVTRRVGVAKLNPFFDGDTDCMEDVQKEFFREGRRPSAKGTHNLRDQSLQGKTTALTQPLLHGPTCKQEAAAQEPPSKYNKNLWHKEIESTFEELFNMNRKLKKHLNLHLEQRLKADQNPDEQQSYSEIRSETFGTPREERTEEVETAEESGSPTEVETTEMWSKVNLKQILSDSEYPRYQQIAKYPLKSESLVPVKAGTSREQDDLLSLSPESGQEPPKSPLLEDESLKPYLQKQADSVASWMALRQKQKAELEQRRQKALLELTEHPNMSLEIHYKAELEEERRARRRMRLALLKSNSTGICALPPDRNNLSLDNGLLDEDKQNQMIRDLQQQILEQNKLHQEFLEKARKRLQEFQKSF</sequence>
<evidence type="ECO:0000250" key="1">
    <source>
        <dbReference type="UniProtKB" id="Q96MC4"/>
    </source>
</evidence>
<evidence type="ECO:0000255" key="2"/>
<evidence type="ECO:0000256" key="3">
    <source>
        <dbReference type="SAM" id="MobiDB-lite"/>
    </source>
</evidence>
<evidence type="ECO:0000269" key="4">
    <source>
    </source>
</evidence>
<evidence type="ECO:0000269" key="5">
    <source>
    </source>
</evidence>
<evidence type="ECO:0000269" key="6">
    <source>
    </source>
</evidence>
<evidence type="ECO:0000303" key="7">
    <source>
    </source>
</evidence>
<evidence type="ECO:0000305" key="8"/>
<evidence type="ECO:0000312" key="9">
    <source>
        <dbReference type="EMBL" id="CAA71005.1"/>
    </source>
</evidence>
<feature type="chain" id="PRO_0000422184" description="CEP295 N-terminal-like protein">
    <location>
        <begin position="1"/>
        <end position="533"/>
    </location>
</feature>
<feature type="region of interest" description="Disordered" evidence="3">
    <location>
        <begin position="1"/>
        <end position="40"/>
    </location>
</feature>
<feature type="region of interest" description="Disordered" evidence="3">
    <location>
        <begin position="84"/>
        <end position="176"/>
    </location>
</feature>
<feature type="region of interest" description="Disordered" evidence="3">
    <location>
        <begin position="286"/>
        <end position="333"/>
    </location>
</feature>
<feature type="region of interest" description="Disordered" evidence="3">
    <location>
        <begin position="370"/>
        <end position="399"/>
    </location>
</feature>
<feature type="coiled-coil region" evidence="2">
    <location>
        <begin position="40"/>
        <end position="72"/>
    </location>
</feature>
<feature type="coiled-coil region" evidence="2">
    <location>
        <begin position="416"/>
        <end position="531"/>
    </location>
</feature>
<feature type="compositionally biased region" description="Basic and acidic residues" evidence="3">
    <location>
        <begin position="107"/>
        <end position="126"/>
    </location>
</feature>
<feature type="sequence conflict" description="In Ref. 1; CAA71005." evidence="8" ref="1">
    <original>D</original>
    <variation>N</variation>
    <location>
        <position position="17"/>
    </location>
</feature>
<feature type="sequence conflict" description="In Ref. 1; CAA71005." evidence="8" ref="1">
    <original>S</original>
    <variation>T</variation>
    <location>
        <position position="85"/>
    </location>
</feature>
<feature type="sequence conflict" description="In Ref. 1; CAA71005." evidence="8" ref="1">
    <original>S</original>
    <variation>R</variation>
    <location>
        <position position="91"/>
    </location>
</feature>
<reference key="1">
    <citation type="journal article" date="1997" name="Mol. Hum. Reprod.">
        <title>Differential display to identify and isolate novel genes expressed during spermatogenesis.</title>
        <authorList>
            <person name="Catalano R.D."/>
            <person name="Vlad M."/>
            <person name="Kennedy R.C."/>
        </authorList>
    </citation>
    <scope>NUCLEOTIDE SEQUENCE [MRNA]</scope>
    <scope>DEVELOPMENTAL STAGE</scope>
</reference>
<reference key="2">
    <citation type="journal article" date="2005" name="Science">
        <title>The transcriptional landscape of the mammalian genome.</title>
        <authorList>
            <person name="Carninci P."/>
            <person name="Kasukawa T."/>
            <person name="Katayama S."/>
            <person name="Gough J."/>
            <person name="Frith M.C."/>
            <person name="Maeda N."/>
            <person name="Oyama R."/>
            <person name="Ravasi T."/>
            <person name="Lenhard B."/>
            <person name="Wells C."/>
            <person name="Kodzius R."/>
            <person name="Shimokawa K."/>
            <person name="Bajic V.B."/>
            <person name="Brenner S.E."/>
            <person name="Batalov S."/>
            <person name="Forrest A.R."/>
            <person name="Zavolan M."/>
            <person name="Davis M.J."/>
            <person name="Wilming L.G."/>
            <person name="Aidinis V."/>
            <person name="Allen J.E."/>
            <person name="Ambesi-Impiombato A."/>
            <person name="Apweiler R."/>
            <person name="Aturaliya R.N."/>
            <person name="Bailey T.L."/>
            <person name="Bansal M."/>
            <person name="Baxter L."/>
            <person name="Beisel K.W."/>
            <person name="Bersano T."/>
            <person name="Bono H."/>
            <person name="Chalk A.M."/>
            <person name="Chiu K.P."/>
            <person name="Choudhary V."/>
            <person name="Christoffels A."/>
            <person name="Clutterbuck D.R."/>
            <person name="Crowe M.L."/>
            <person name="Dalla E."/>
            <person name="Dalrymple B.P."/>
            <person name="de Bono B."/>
            <person name="Della Gatta G."/>
            <person name="di Bernardo D."/>
            <person name="Down T."/>
            <person name="Engstrom P."/>
            <person name="Fagiolini M."/>
            <person name="Faulkner G."/>
            <person name="Fletcher C.F."/>
            <person name="Fukushima T."/>
            <person name="Furuno M."/>
            <person name="Futaki S."/>
            <person name="Gariboldi M."/>
            <person name="Georgii-Hemming P."/>
            <person name="Gingeras T.R."/>
            <person name="Gojobori T."/>
            <person name="Green R.E."/>
            <person name="Gustincich S."/>
            <person name="Harbers M."/>
            <person name="Hayashi Y."/>
            <person name="Hensch T.K."/>
            <person name="Hirokawa N."/>
            <person name="Hill D."/>
            <person name="Huminiecki L."/>
            <person name="Iacono M."/>
            <person name="Ikeo K."/>
            <person name="Iwama A."/>
            <person name="Ishikawa T."/>
            <person name="Jakt M."/>
            <person name="Kanapin A."/>
            <person name="Katoh M."/>
            <person name="Kawasawa Y."/>
            <person name="Kelso J."/>
            <person name="Kitamura H."/>
            <person name="Kitano H."/>
            <person name="Kollias G."/>
            <person name="Krishnan S.P."/>
            <person name="Kruger A."/>
            <person name="Kummerfeld S.K."/>
            <person name="Kurochkin I.V."/>
            <person name="Lareau L.F."/>
            <person name="Lazarevic D."/>
            <person name="Lipovich L."/>
            <person name="Liu J."/>
            <person name="Liuni S."/>
            <person name="McWilliam S."/>
            <person name="Madan Babu M."/>
            <person name="Madera M."/>
            <person name="Marchionni L."/>
            <person name="Matsuda H."/>
            <person name="Matsuzawa S."/>
            <person name="Miki H."/>
            <person name="Mignone F."/>
            <person name="Miyake S."/>
            <person name="Morris K."/>
            <person name="Mottagui-Tabar S."/>
            <person name="Mulder N."/>
            <person name="Nakano N."/>
            <person name="Nakauchi H."/>
            <person name="Ng P."/>
            <person name="Nilsson R."/>
            <person name="Nishiguchi S."/>
            <person name="Nishikawa S."/>
            <person name="Nori F."/>
            <person name="Ohara O."/>
            <person name="Okazaki Y."/>
            <person name="Orlando V."/>
            <person name="Pang K.C."/>
            <person name="Pavan W.J."/>
            <person name="Pavesi G."/>
            <person name="Pesole G."/>
            <person name="Petrovsky N."/>
            <person name="Piazza S."/>
            <person name="Reed J."/>
            <person name="Reid J.F."/>
            <person name="Ring B.Z."/>
            <person name="Ringwald M."/>
            <person name="Rost B."/>
            <person name="Ruan Y."/>
            <person name="Salzberg S.L."/>
            <person name="Sandelin A."/>
            <person name="Schneider C."/>
            <person name="Schoenbach C."/>
            <person name="Sekiguchi K."/>
            <person name="Semple C.A."/>
            <person name="Seno S."/>
            <person name="Sessa L."/>
            <person name="Sheng Y."/>
            <person name="Shibata Y."/>
            <person name="Shimada H."/>
            <person name="Shimada K."/>
            <person name="Silva D."/>
            <person name="Sinclair B."/>
            <person name="Sperling S."/>
            <person name="Stupka E."/>
            <person name="Sugiura K."/>
            <person name="Sultana R."/>
            <person name="Takenaka Y."/>
            <person name="Taki K."/>
            <person name="Tammoja K."/>
            <person name="Tan S.L."/>
            <person name="Tang S."/>
            <person name="Taylor M.S."/>
            <person name="Tegner J."/>
            <person name="Teichmann S.A."/>
            <person name="Ueda H.R."/>
            <person name="van Nimwegen E."/>
            <person name="Verardo R."/>
            <person name="Wei C.L."/>
            <person name="Yagi K."/>
            <person name="Yamanishi H."/>
            <person name="Zabarovsky E."/>
            <person name="Zhu S."/>
            <person name="Zimmer A."/>
            <person name="Hide W."/>
            <person name="Bult C."/>
            <person name="Grimmond S.M."/>
            <person name="Teasdale R.D."/>
            <person name="Liu E.T."/>
            <person name="Brusic V."/>
            <person name="Quackenbush J."/>
            <person name="Wahlestedt C."/>
            <person name="Mattick J.S."/>
            <person name="Hume D.A."/>
            <person name="Kai C."/>
            <person name="Sasaki D."/>
            <person name="Tomaru Y."/>
            <person name="Fukuda S."/>
            <person name="Kanamori-Katayama M."/>
            <person name="Suzuki M."/>
            <person name="Aoki J."/>
            <person name="Arakawa T."/>
            <person name="Iida J."/>
            <person name="Imamura K."/>
            <person name="Itoh M."/>
            <person name="Kato T."/>
            <person name="Kawaji H."/>
            <person name="Kawagashira N."/>
            <person name="Kawashima T."/>
            <person name="Kojima M."/>
            <person name="Kondo S."/>
            <person name="Konno H."/>
            <person name="Nakano K."/>
            <person name="Ninomiya N."/>
            <person name="Nishio T."/>
            <person name="Okada M."/>
            <person name="Plessy C."/>
            <person name="Shibata K."/>
            <person name="Shiraki T."/>
            <person name="Suzuki S."/>
            <person name="Tagami M."/>
            <person name="Waki K."/>
            <person name="Watahiki A."/>
            <person name="Okamura-Oho Y."/>
            <person name="Suzuki H."/>
            <person name="Kawai J."/>
            <person name="Hayashizaki Y."/>
        </authorList>
    </citation>
    <scope>NUCLEOTIDE SEQUENCE [LARGE SCALE MRNA]</scope>
    <source>
        <strain>C57BL/6J</strain>
        <tissue>Testis</tissue>
    </source>
</reference>
<reference key="3">
    <citation type="journal article" date="2009" name="PLoS Biol.">
        <title>Lineage-specific biology revealed by a finished genome assembly of the mouse.</title>
        <authorList>
            <person name="Church D.M."/>
            <person name="Goodstadt L."/>
            <person name="Hillier L.W."/>
            <person name="Zody M.C."/>
            <person name="Goldstein S."/>
            <person name="She X."/>
            <person name="Bult C.J."/>
            <person name="Agarwala R."/>
            <person name="Cherry J.L."/>
            <person name="DiCuccio M."/>
            <person name="Hlavina W."/>
            <person name="Kapustin Y."/>
            <person name="Meric P."/>
            <person name="Maglott D."/>
            <person name="Birtle Z."/>
            <person name="Marques A.C."/>
            <person name="Graves T."/>
            <person name="Zhou S."/>
            <person name="Teague B."/>
            <person name="Potamousis K."/>
            <person name="Churas C."/>
            <person name="Place M."/>
            <person name="Herschleb J."/>
            <person name="Runnheim R."/>
            <person name="Forrest D."/>
            <person name="Amos-Landgraf J."/>
            <person name="Schwartz D.C."/>
            <person name="Cheng Z."/>
            <person name="Lindblad-Toh K."/>
            <person name="Eichler E.E."/>
            <person name="Ponting C.P."/>
        </authorList>
    </citation>
    <scope>NUCLEOTIDE SEQUENCE [LARGE SCALE GENOMIC DNA]</scope>
    <source>
        <strain>C57BL/6J</strain>
    </source>
</reference>
<reference key="4">
    <citation type="journal article" date="2004" name="Genome Res.">
        <title>The status, quality, and expansion of the NIH full-length cDNA project: the Mammalian Gene Collection (MGC).</title>
        <authorList>
            <consortium name="The MGC Project Team"/>
        </authorList>
    </citation>
    <scope>NUCLEOTIDE SEQUENCE [LARGE SCALE MRNA]</scope>
    <source>
        <tissue>Testis</tissue>
    </source>
</reference>
<reference key="5">
    <citation type="journal article" date="2007" name="Physiol. Genomics">
        <title>Potential regulatory relationship between the nested gene DDC8 and its host gene tissue inhibitor of metalloproteinase-2.</title>
        <authorList>
            <person name="Jaworski D.M."/>
            <person name="Beem-Miller M."/>
            <person name="Lluri G."/>
            <person name="Barrantes-Reynolds R."/>
        </authorList>
    </citation>
    <scope>TISSUE SPECIFICITY</scope>
    <scope>DEVELOPMENTAL STAGE</scope>
    <scope>INDUCTION BY INJURY</scope>
</reference>
<reference key="6">
    <citation type="journal article" date="2009" name="Biochem. Biophys. Res. Commun.">
        <title>Male germ cell-specific protein Trs4 binds to multiple proteins.</title>
        <authorList>
            <person name="Shi Y.Q."/>
            <person name="Li Y.C."/>
            <person name="Hu X.Q."/>
            <person name="Liu T."/>
            <person name="Liao S.Y."/>
            <person name="Guo J."/>
            <person name="Huang L."/>
            <person name="Hu Z.Y."/>
            <person name="Tang A.Y."/>
            <person name="Lee K.F."/>
            <person name="Yeung W.S."/>
            <person name="Han C.S."/>
            <person name="Liu Y.X."/>
        </authorList>
    </citation>
    <scope>SUBCELLULAR LOCATION</scope>
    <scope>TISSUE SPECIFICITY</scope>
    <scope>DEVELOPMENTAL STAGE</scope>
</reference>
<name>C295L_MOUSE</name>
<organism>
    <name type="scientific">Mus musculus</name>
    <name type="common">Mouse</name>
    <dbReference type="NCBI Taxonomy" id="10090"/>
    <lineage>
        <taxon>Eukaryota</taxon>
        <taxon>Metazoa</taxon>
        <taxon>Chordata</taxon>
        <taxon>Craniata</taxon>
        <taxon>Vertebrata</taxon>
        <taxon>Euteleostomi</taxon>
        <taxon>Mammalia</taxon>
        <taxon>Eutheria</taxon>
        <taxon>Euarchontoglires</taxon>
        <taxon>Glires</taxon>
        <taxon>Rodentia</taxon>
        <taxon>Myomorpha</taxon>
        <taxon>Muroidea</taxon>
        <taxon>Muridae</taxon>
        <taxon>Murinae</taxon>
        <taxon>Mus</taxon>
        <taxon>Mus</taxon>
    </lineage>
</organism>